<evidence type="ECO:0000250" key="1"/>
<evidence type="ECO:0000250" key="2">
    <source>
        <dbReference type="UniProtKB" id="O07639"/>
    </source>
</evidence>
<evidence type="ECO:0000250" key="3">
    <source>
        <dbReference type="UniProtKB" id="P39604"/>
    </source>
</evidence>
<evidence type="ECO:0000255" key="4"/>
<evidence type="ECO:0000305" key="5"/>
<name>FTSW_LACLA</name>
<sequence length="420" mass="46097">MNLNKNNFLNYSILIPYLILAGIGIVMVFSTTVPDQLQKGLNPYKLVINQTAFELLSLIMIAVIYRLKLRALKNRKMIGTIMVILILSLIFCRIMPSSFALTAPVNGARGWIHIPGIGTVQPAEFAKVFIIWYLASVFSTKQEEIEKRDINEIFKGKTLFQKLFGGWRLPVVAILLVDLIMPDLGNTLIIAAVALIMIGASGISWRWYSGYSKLILSLMAIFLGFLFIVGGNIIPSFLPITYINKRFEAFVNPFTDLANSGHQLANSYYAIVNGGWTGRGLGNSIQKNGFLPEAQTDFIFPIVVEELGIIGGIIILAILFFLISRMLIVGIRAKSAFNSLIMIGVSGLLLVQVFVNVGGAIGIIPETGVTFPFLSQGGSSFLGLSLGIAFALNISADEKRREVSELSNHYSSSVPTYEND</sequence>
<accession>P58119</accession>
<feature type="chain" id="PRO_0000062707" description="Probable peptidoglycan glycosyltransferase FtsW">
    <location>
        <begin position="1"/>
        <end position="420"/>
    </location>
</feature>
<feature type="topological domain" description="Cytoplasmic" evidence="4">
    <location>
        <begin position="1"/>
        <end position="12"/>
    </location>
</feature>
<feature type="transmembrane region" description="Helical" evidence="4">
    <location>
        <begin position="13"/>
        <end position="33"/>
    </location>
</feature>
<feature type="topological domain" description="Extracellular" evidence="4">
    <location>
        <begin position="34"/>
        <end position="43"/>
    </location>
</feature>
<feature type="transmembrane region" description="Helical" evidence="4">
    <location>
        <begin position="44"/>
        <end position="64"/>
    </location>
</feature>
<feature type="topological domain" description="Cytoplasmic" evidence="4">
    <location>
        <begin position="65"/>
        <end position="80"/>
    </location>
</feature>
<feature type="transmembrane region" description="Helical" evidence="4">
    <location>
        <begin position="81"/>
        <end position="101"/>
    </location>
</feature>
<feature type="topological domain" description="Extracellular" evidence="4">
    <location>
        <begin position="102"/>
        <end position="113"/>
    </location>
</feature>
<feature type="transmembrane region" description="Helical" evidence="4">
    <location>
        <begin position="114"/>
        <end position="134"/>
    </location>
</feature>
<feature type="topological domain" description="Cytoplasmic" evidence="4">
    <location>
        <begin position="135"/>
        <end position="157"/>
    </location>
</feature>
<feature type="transmembrane region" description="Helical" evidence="4">
    <location>
        <begin position="158"/>
        <end position="178"/>
    </location>
</feature>
<feature type="transmembrane region" description="Helical" evidence="4">
    <location>
        <begin position="179"/>
        <end position="199"/>
    </location>
</feature>
<feature type="topological domain" description="Cytoplasmic" evidence="4">
    <location>
        <begin position="200"/>
        <end position="213"/>
    </location>
</feature>
<feature type="transmembrane region" description="Helical" evidence="4">
    <location>
        <begin position="214"/>
        <end position="234"/>
    </location>
</feature>
<feature type="topological domain" description="Extracellular" evidence="4">
    <location>
        <begin position="235"/>
        <end position="301"/>
    </location>
</feature>
<feature type="transmembrane region" description="Helical" evidence="4">
    <location>
        <begin position="302"/>
        <end position="322"/>
    </location>
</feature>
<feature type="topological domain" description="Cytoplasmic" evidence="4">
    <location>
        <begin position="323"/>
        <end position="340"/>
    </location>
</feature>
<feature type="transmembrane region" description="Helical" evidence="4">
    <location>
        <begin position="341"/>
        <end position="361"/>
    </location>
</feature>
<feature type="topological domain" description="Extracellular" evidence="4">
    <location>
        <begin position="362"/>
        <end position="370"/>
    </location>
</feature>
<feature type="transmembrane region" description="Helical" evidence="4">
    <location>
        <begin position="371"/>
        <end position="391"/>
    </location>
</feature>
<feature type="topological domain" description="Cytoplasmic" evidence="4">
    <location>
        <begin position="392"/>
        <end position="420"/>
    </location>
</feature>
<proteinExistence type="inferred from homology"/>
<protein>
    <recommendedName>
        <fullName evidence="3">Probable peptidoglycan glycosyltransferase FtsW</fullName>
        <shortName evidence="3">PGT</shortName>
        <ecNumber evidence="3">2.4.99.28</ecNumber>
    </recommendedName>
    <alternativeName>
        <fullName evidence="2">Cell division protein FtsW</fullName>
    </alternativeName>
    <alternativeName>
        <fullName evidence="3">Cell wall polymerase</fullName>
    </alternativeName>
    <alternativeName>
        <fullName evidence="3">Peptidoglycan polymerase</fullName>
        <shortName evidence="3">PG polymerase</shortName>
    </alternativeName>
</protein>
<keyword id="KW-0131">Cell cycle</keyword>
<keyword id="KW-0132">Cell division</keyword>
<keyword id="KW-1003">Cell membrane</keyword>
<keyword id="KW-0133">Cell shape</keyword>
<keyword id="KW-0961">Cell wall biogenesis/degradation</keyword>
<keyword id="KW-0328">Glycosyltransferase</keyword>
<keyword id="KW-0472">Membrane</keyword>
<keyword id="KW-0573">Peptidoglycan synthesis</keyword>
<keyword id="KW-1185">Reference proteome</keyword>
<keyword id="KW-0808">Transferase</keyword>
<keyword id="KW-0812">Transmembrane</keyword>
<keyword id="KW-1133">Transmembrane helix</keyword>
<gene>
    <name type="primary">ftsW</name>
    <name type="ordered locus">LL0668</name>
    <name type="ORF">L62179</name>
</gene>
<dbReference type="EC" id="2.4.99.28" evidence="3"/>
<dbReference type="EMBL" id="AE005176">
    <property type="protein sequence ID" value="AAK04766.1"/>
    <property type="molecule type" value="Genomic_DNA"/>
</dbReference>
<dbReference type="PIR" id="D86708">
    <property type="entry name" value="D86708"/>
</dbReference>
<dbReference type="RefSeq" id="NP_266824.1">
    <property type="nucleotide sequence ID" value="NC_002662.1"/>
</dbReference>
<dbReference type="RefSeq" id="WP_010905497.1">
    <property type="nucleotide sequence ID" value="NC_002662.1"/>
</dbReference>
<dbReference type="SMR" id="P58119"/>
<dbReference type="PaxDb" id="272623-L62179"/>
<dbReference type="EnsemblBacteria" id="AAK04766">
    <property type="protein sequence ID" value="AAK04766"/>
    <property type="gene ID" value="L62179"/>
</dbReference>
<dbReference type="KEGG" id="lla:L62179"/>
<dbReference type="PATRIC" id="fig|272623.7.peg.715"/>
<dbReference type="eggNOG" id="COG0772">
    <property type="taxonomic scope" value="Bacteria"/>
</dbReference>
<dbReference type="HOGENOM" id="CLU_029243_1_2_9"/>
<dbReference type="OrthoDB" id="9812661at2"/>
<dbReference type="UniPathway" id="UPA00219"/>
<dbReference type="Proteomes" id="UP000002196">
    <property type="component" value="Chromosome"/>
</dbReference>
<dbReference type="GO" id="GO:0032153">
    <property type="term" value="C:cell division site"/>
    <property type="evidence" value="ECO:0007669"/>
    <property type="project" value="TreeGrafter"/>
</dbReference>
<dbReference type="GO" id="GO:0005886">
    <property type="term" value="C:plasma membrane"/>
    <property type="evidence" value="ECO:0007669"/>
    <property type="project" value="UniProtKB-SubCell"/>
</dbReference>
<dbReference type="GO" id="GO:0015648">
    <property type="term" value="F:lipid-linked peptidoglycan transporter activity"/>
    <property type="evidence" value="ECO:0007669"/>
    <property type="project" value="TreeGrafter"/>
</dbReference>
<dbReference type="GO" id="GO:0008955">
    <property type="term" value="F:peptidoglycan glycosyltransferase activity"/>
    <property type="evidence" value="ECO:0007669"/>
    <property type="project" value="RHEA"/>
</dbReference>
<dbReference type="GO" id="GO:0051301">
    <property type="term" value="P:cell division"/>
    <property type="evidence" value="ECO:0007669"/>
    <property type="project" value="UniProtKB-KW"/>
</dbReference>
<dbReference type="GO" id="GO:0071555">
    <property type="term" value="P:cell wall organization"/>
    <property type="evidence" value="ECO:0007669"/>
    <property type="project" value="UniProtKB-KW"/>
</dbReference>
<dbReference type="GO" id="GO:0009252">
    <property type="term" value="P:peptidoglycan biosynthetic process"/>
    <property type="evidence" value="ECO:0007669"/>
    <property type="project" value="UniProtKB-UniPathway"/>
</dbReference>
<dbReference type="GO" id="GO:0008360">
    <property type="term" value="P:regulation of cell shape"/>
    <property type="evidence" value="ECO:0007669"/>
    <property type="project" value="UniProtKB-KW"/>
</dbReference>
<dbReference type="InterPro" id="IPR018365">
    <property type="entry name" value="Cell_cycle_FtsW-rel_CS"/>
</dbReference>
<dbReference type="InterPro" id="IPR001182">
    <property type="entry name" value="FtsW/RodA"/>
</dbReference>
<dbReference type="PANTHER" id="PTHR30474">
    <property type="entry name" value="CELL CYCLE PROTEIN"/>
    <property type="match status" value="1"/>
</dbReference>
<dbReference type="PANTHER" id="PTHR30474:SF2">
    <property type="entry name" value="PEPTIDOGLYCAN GLYCOSYLTRANSFERASE FTSW-RELATED"/>
    <property type="match status" value="1"/>
</dbReference>
<dbReference type="Pfam" id="PF01098">
    <property type="entry name" value="FTSW_RODA_SPOVE"/>
    <property type="match status" value="1"/>
</dbReference>
<dbReference type="PROSITE" id="PS00428">
    <property type="entry name" value="FTSW_RODA_SPOVE"/>
    <property type="match status" value="1"/>
</dbReference>
<organism>
    <name type="scientific">Lactococcus lactis subsp. lactis (strain IL1403)</name>
    <name type="common">Streptococcus lactis</name>
    <dbReference type="NCBI Taxonomy" id="272623"/>
    <lineage>
        <taxon>Bacteria</taxon>
        <taxon>Bacillati</taxon>
        <taxon>Bacillota</taxon>
        <taxon>Bacilli</taxon>
        <taxon>Lactobacillales</taxon>
        <taxon>Streptococcaceae</taxon>
        <taxon>Lactococcus</taxon>
    </lineage>
</organism>
<reference key="1">
    <citation type="journal article" date="2001" name="Genome Res.">
        <title>The complete genome sequence of the lactic acid bacterium Lactococcus lactis ssp. lactis IL1403.</title>
        <authorList>
            <person name="Bolotin A."/>
            <person name="Wincker P."/>
            <person name="Mauger S."/>
            <person name="Jaillon O."/>
            <person name="Malarme K."/>
            <person name="Weissenbach J."/>
            <person name="Ehrlich S.D."/>
            <person name="Sorokin A."/>
        </authorList>
    </citation>
    <scope>NUCLEOTIDE SEQUENCE [LARGE SCALE GENOMIC DNA]</scope>
    <source>
        <strain>IL1403</strain>
    </source>
</reference>
<comment type="function">
    <text evidence="3">Peptidoglycan polymerase that is essential for cell division.</text>
</comment>
<comment type="catalytic activity">
    <reaction evidence="3">
        <text>[GlcNAc-(1-&gt;4)-Mur2Ac(oyl-L-Ala-gamma-D-Glu-L-Lys-D-Ala-D-Ala)](n)-di-trans,octa-cis-undecaprenyl diphosphate + beta-D-GlcNAc-(1-&gt;4)-Mur2Ac(oyl-L-Ala-gamma-D-Glu-L-Lys-D-Ala-D-Ala)-di-trans,octa-cis-undecaprenyl diphosphate = [GlcNAc-(1-&gt;4)-Mur2Ac(oyl-L-Ala-gamma-D-Glu-L-Lys-D-Ala-D-Ala)](n+1)-di-trans,octa-cis-undecaprenyl diphosphate + di-trans,octa-cis-undecaprenyl diphosphate + H(+)</text>
        <dbReference type="Rhea" id="RHEA:23708"/>
        <dbReference type="Rhea" id="RHEA-COMP:9602"/>
        <dbReference type="Rhea" id="RHEA-COMP:9603"/>
        <dbReference type="ChEBI" id="CHEBI:15378"/>
        <dbReference type="ChEBI" id="CHEBI:58405"/>
        <dbReference type="ChEBI" id="CHEBI:60033"/>
        <dbReference type="ChEBI" id="CHEBI:78435"/>
        <dbReference type="EC" id="2.4.99.28"/>
    </reaction>
</comment>
<comment type="pathway">
    <text evidence="3">Cell wall biogenesis; peptidoglycan biosynthesis.</text>
</comment>
<comment type="subcellular location">
    <subcellularLocation>
        <location evidence="1">Cell membrane</location>
        <topology evidence="4">Multi-pass membrane protein</topology>
    </subcellularLocation>
    <text evidence="1">Localizes to the division septum.</text>
</comment>
<comment type="similarity">
    <text evidence="5">Belongs to the SEDS family. FtsW subfamily.</text>
</comment>